<keyword id="KW-0067">ATP-binding</keyword>
<keyword id="KW-0963">Cytoplasm</keyword>
<keyword id="KW-0275">Fatty acid biosynthesis</keyword>
<keyword id="KW-0276">Fatty acid metabolism</keyword>
<keyword id="KW-0444">Lipid biosynthesis</keyword>
<keyword id="KW-0443">Lipid metabolism</keyword>
<keyword id="KW-0479">Metal-binding</keyword>
<keyword id="KW-0547">Nucleotide-binding</keyword>
<keyword id="KW-1185">Reference proteome</keyword>
<keyword id="KW-0808">Transferase</keyword>
<keyword id="KW-0862">Zinc</keyword>
<keyword id="KW-0863">Zinc-finger</keyword>
<sequence>MTWPEKTLPTTDASEKRSLGAGVFRRCDGCSHTHDAAELARTFEVCSQCGHHHKLDADGWRRLLLDDGELAAWDEHLVPNDPLRFSDGKSYRDRVAALHKKGRAKEAIEIGRGRLGGRDIAYGAFVFAFMGGSMGSVVGEKITRLFERATREELPVVLLQASGGARMQEGILSLMQMAKSVSALERYRKARLPFLSVLLHPTTGGVAASFAFLGDANIAEPKALIGFAGPRVIENTIRQTLPAGFQRSEFLLDHGMVDAIVPRPEMKAYIGTLLQHLTAGRRARR</sequence>
<organism>
    <name type="scientific">Sorangium cellulosum (strain So ce56)</name>
    <name type="common">Polyangium cellulosum (strain So ce56)</name>
    <dbReference type="NCBI Taxonomy" id="448385"/>
    <lineage>
        <taxon>Bacteria</taxon>
        <taxon>Pseudomonadati</taxon>
        <taxon>Myxococcota</taxon>
        <taxon>Polyangia</taxon>
        <taxon>Polyangiales</taxon>
        <taxon>Polyangiaceae</taxon>
        <taxon>Sorangium</taxon>
    </lineage>
</organism>
<reference key="1">
    <citation type="journal article" date="2007" name="Nat. Biotechnol.">
        <title>Complete genome sequence of the myxobacterium Sorangium cellulosum.</title>
        <authorList>
            <person name="Schneiker S."/>
            <person name="Perlova O."/>
            <person name="Kaiser O."/>
            <person name="Gerth K."/>
            <person name="Alici A."/>
            <person name="Altmeyer M.O."/>
            <person name="Bartels D."/>
            <person name="Bekel T."/>
            <person name="Beyer S."/>
            <person name="Bode E."/>
            <person name="Bode H.B."/>
            <person name="Bolten C.J."/>
            <person name="Choudhuri J.V."/>
            <person name="Doss S."/>
            <person name="Elnakady Y.A."/>
            <person name="Frank B."/>
            <person name="Gaigalat L."/>
            <person name="Goesmann A."/>
            <person name="Groeger C."/>
            <person name="Gross F."/>
            <person name="Jelsbak L."/>
            <person name="Jelsbak L."/>
            <person name="Kalinowski J."/>
            <person name="Kegler C."/>
            <person name="Knauber T."/>
            <person name="Konietzny S."/>
            <person name="Kopp M."/>
            <person name="Krause L."/>
            <person name="Krug D."/>
            <person name="Linke B."/>
            <person name="Mahmud T."/>
            <person name="Martinez-Arias R."/>
            <person name="McHardy A.C."/>
            <person name="Merai M."/>
            <person name="Meyer F."/>
            <person name="Mormann S."/>
            <person name="Munoz-Dorado J."/>
            <person name="Perez J."/>
            <person name="Pradella S."/>
            <person name="Rachid S."/>
            <person name="Raddatz G."/>
            <person name="Rosenau F."/>
            <person name="Rueckert C."/>
            <person name="Sasse F."/>
            <person name="Scharfe M."/>
            <person name="Schuster S.C."/>
            <person name="Suen G."/>
            <person name="Treuner-Lange A."/>
            <person name="Velicer G.J."/>
            <person name="Vorholter F.-J."/>
            <person name="Weissman K.J."/>
            <person name="Welch R.D."/>
            <person name="Wenzel S.C."/>
            <person name="Whitworth D.E."/>
            <person name="Wilhelm S."/>
            <person name="Wittmann C."/>
            <person name="Bloecker H."/>
            <person name="Puehler A."/>
            <person name="Mueller R."/>
        </authorList>
    </citation>
    <scope>NUCLEOTIDE SEQUENCE [LARGE SCALE GENOMIC DNA]</scope>
    <source>
        <strain>So ce56</strain>
    </source>
</reference>
<evidence type="ECO:0000255" key="1">
    <source>
        <dbReference type="HAMAP-Rule" id="MF_01395"/>
    </source>
</evidence>
<evidence type="ECO:0000255" key="2">
    <source>
        <dbReference type="PROSITE-ProRule" id="PRU01136"/>
    </source>
</evidence>
<protein>
    <recommendedName>
        <fullName evidence="1">Acetyl-coenzyme A carboxylase carboxyl transferase subunit beta</fullName>
        <shortName evidence="1">ACCase subunit beta</shortName>
        <shortName evidence="1">Acetyl-CoA carboxylase carboxyltransferase subunit beta</shortName>
        <ecNumber evidence="1">2.1.3.15</ecNumber>
    </recommendedName>
</protein>
<feature type="chain" id="PRO_0000389846" description="Acetyl-coenzyme A carboxylase carboxyl transferase subunit beta">
    <location>
        <begin position="1"/>
        <end position="285"/>
    </location>
</feature>
<feature type="domain" description="CoA carboxyltransferase N-terminal" evidence="2">
    <location>
        <begin position="23"/>
        <end position="285"/>
    </location>
</feature>
<feature type="zinc finger region" description="C4-type" evidence="1">
    <location>
        <begin position="27"/>
        <end position="49"/>
    </location>
</feature>
<feature type="binding site" evidence="1">
    <location>
        <position position="27"/>
    </location>
    <ligand>
        <name>Zn(2+)</name>
        <dbReference type="ChEBI" id="CHEBI:29105"/>
    </ligand>
</feature>
<feature type="binding site" evidence="1">
    <location>
        <position position="30"/>
    </location>
    <ligand>
        <name>Zn(2+)</name>
        <dbReference type="ChEBI" id="CHEBI:29105"/>
    </ligand>
</feature>
<feature type="binding site" evidence="1">
    <location>
        <position position="46"/>
    </location>
    <ligand>
        <name>Zn(2+)</name>
        <dbReference type="ChEBI" id="CHEBI:29105"/>
    </ligand>
</feature>
<feature type="binding site" evidence="1">
    <location>
        <position position="49"/>
    </location>
    <ligand>
        <name>Zn(2+)</name>
        <dbReference type="ChEBI" id="CHEBI:29105"/>
    </ligand>
</feature>
<proteinExistence type="inferred from homology"/>
<gene>
    <name evidence="1" type="primary">accD</name>
    <name type="ordered locus">sce5786</name>
</gene>
<name>ACCD_SORC5</name>
<dbReference type="EC" id="2.1.3.15" evidence="1"/>
<dbReference type="EMBL" id="AM746676">
    <property type="protein sequence ID" value="CAN95949.1"/>
    <property type="molecule type" value="Genomic_DNA"/>
</dbReference>
<dbReference type="RefSeq" id="WP_012238414.1">
    <property type="nucleotide sequence ID" value="NC_010162.1"/>
</dbReference>
<dbReference type="SMR" id="A9G853"/>
<dbReference type="STRING" id="448385.sce5786"/>
<dbReference type="KEGG" id="scl:sce5786"/>
<dbReference type="eggNOG" id="COG0777">
    <property type="taxonomic scope" value="Bacteria"/>
</dbReference>
<dbReference type="HOGENOM" id="CLU_015486_1_1_7"/>
<dbReference type="OrthoDB" id="9772975at2"/>
<dbReference type="BioCyc" id="SCEL448385:SCE_RS29735-MONOMER"/>
<dbReference type="UniPathway" id="UPA00655">
    <property type="reaction ID" value="UER00711"/>
</dbReference>
<dbReference type="Proteomes" id="UP000002139">
    <property type="component" value="Chromosome"/>
</dbReference>
<dbReference type="GO" id="GO:0009317">
    <property type="term" value="C:acetyl-CoA carboxylase complex"/>
    <property type="evidence" value="ECO:0007669"/>
    <property type="project" value="InterPro"/>
</dbReference>
<dbReference type="GO" id="GO:0003989">
    <property type="term" value="F:acetyl-CoA carboxylase activity"/>
    <property type="evidence" value="ECO:0007669"/>
    <property type="project" value="InterPro"/>
</dbReference>
<dbReference type="GO" id="GO:0005524">
    <property type="term" value="F:ATP binding"/>
    <property type="evidence" value="ECO:0007669"/>
    <property type="project" value="UniProtKB-KW"/>
</dbReference>
<dbReference type="GO" id="GO:0016743">
    <property type="term" value="F:carboxyl- or carbamoyltransferase activity"/>
    <property type="evidence" value="ECO:0007669"/>
    <property type="project" value="UniProtKB-UniRule"/>
</dbReference>
<dbReference type="GO" id="GO:0008270">
    <property type="term" value="F:zinc ion binding"/>
    <property type="evidence" value="ECO:0007669"/>
    <property type="project" value="UniProtKB-UniRule"/>
</dbReference>
<dbReference type="GO" id="GO:0006633">
    <property type="term" value="P:fatty acid biosynthetic process"/>
    <property type="evidence" value="ECO:0007669"/>
    <property type="project" value="UniProtKB-KW"/>
</dbReference>
<dbReference type="GO" id="GO:2001295">
    <property type="term" value="P:malonyl-CoA biosynthetic process"/>
    <property type="evidence" value="ECO:0007669"/>
    <property type="project" value="UniProtKB-UniRule"/>
</dbReference>
<dbReference type="Gene3D" id="3.90.226.10">
    <property type="entry name" value="2-enoyl-CoA Hydratase, Chain A, domain 1"/>
    <property type="match status" value="1"/>
</dbReference>
<dbReference type="HAMAP" id="MF_01395">
    <property type="entry name" value="AcetylCoA_CT_beta"/>
    <property type="match status" value="1"/>
</dbReference>
<dbReference type="InterPro" id="IPR034733">
    <property type="entry name" value="AcCoA_carboxyl_beta"/>
</dbReference>
<dbReference type="InterPro" id="IPR000438">
    <property type="entry name" value="Acetyl_CoA_COase_Trfase_b_su"/>
</dbReference>
<dbReference type="InterPro" id="IPR029045">
    <property type="entry name" value="ClpP/crotonase-like_dom_sf"/>
</dbReference>
<dbReference type="InterPro" id="IPR011762">
    <property type="entry name" value="COA_CT_N"/>
</dbReference>
<dbReference type="NCBIfam" id="TIGR00515">
    <property type="entry name" value="accD"/>
    <property type="match status" value="1"/>
</dbReference>
<dbReference type="PANTHER" id="PTHR42995">
    <property type="entry name" value="ACETYL-COENZYME A CARBOXYLASE CARBOXYL TRANSFERASE SUBUNIT BETA, CHLOROPLASTIC"/>
    <property type="match status" value="1"/>
</dbReference>
<dbReference type="PANTHER" id="PTHR42995:SF5">
    <property type="entry name" value="ACETYL-COENZYME A CARBOXYLASE CARBOXYL TRANSFERASE SUBUNIT BETA, CHLOROPLASTIC"/>
    <property type="match status" value="1"/>
</dbReference>
<dbReference type="Pfam" id="PF01039">
    <property type="entry name" value="Carboxyl_trans"/>
    <property type="match status" value="1"/>
</dbReference>
<dbReference type="PRINTS" id="PR01070">
    <property type="entry name" value="ACCCTRFRASEB"/>
</dbReference>
<dbReference type="SUPFAM" id="SSF52096">
    <property type="entry name" value="ClpP/crotonase"/>
    <property type="match status" value="1"/>
</dbReference>
<dbReference type="PROSITE" id="PS50980">
    <property type="entry name" value="COA_CT_NTER"/>
    <property type="match status" value="1"/>
</dbReference>
<accession>A9G853</accession>
<comment type="function">
    <text evidence="1">Component of the acetyl coenzyme A carboxylase (ACC) complex. Biotin carboxylase (BC) catalyzes the carboxylation of biotin on its carrier protein (BCCP) and then the CO(2) group is transferred by the transcarboxylase to acetyl-CoA to form malonyl-CoA.</text>
</comment>
<comment type="catalytic activity">
    <reaction evidence="1">
        <text>N(6)-carboxybiotinyl-L-lysyl-[protein] + acetyl-CoA = N(6)-biotinyl-L-lysyl-[protein] + malonyl-CoA</text>
        <dbReference type="Rhea" id="RHEA:54728"/>
        <dbReference type="Rhea" id="RHEA-COMP:10505"/>
        <dbReference type="Rhea" id="RHEA-COMP:10506"/>
        <dbReference type="ChEBI" id="CHEBI:57288"/>
        <dbReference type="ChEBI" id="CHEBI:57384"/>
        <dbReference type="ChEBI" id="CHEBI:83144"/>
        <dbReference type="ChEBI" id="CHEBI:83145"/>
        <dbReference type="EC" id="2.1.3.15"/>
    </reaction>
</comment>
<comment type="cofactor">
    <cofactor evidence="1">
        <name>Zn(2+)</name>
        <dbReference type="ChEBI" id="CHEBI:29105"/>
    </cofactor>
    <text evidence="1">Binds 1 zinc ion per subunit.</text>
</comment>
<comment type="pathway">
    <text evidence="1">Lipid metabolism; malonyl-CoA biosynthesis; malonyl-CoA from acetyl-CoA: step 1/1.</text>
</comment>
<comment type="subunit">
    <text evidence="1">Acetyl-CoA carboxylase is a heterohexamer composed of biotin carboxyl carrier protein (AccB), biotin carboxylase (AccC) and two subunits each of ACCase subunit alpha (AccA) and ACCase subunit beta (AccD).</text>
</comment>
<comment type="subcellular location">
    <subcellularLocation>
        <location evidence="1">Cytoplasm</location>
    </subcellularLocation>
</comment>
<comment type="similarity">
    <text evidence="1">Belongs to the AccD/PCCB family.</text>
</comment>